<dbReference type="EC" id="2.1.3.2" evidence="1"/>
<dbReference type="EMBL" id="CP000538">
    <property type="protein sequence ID" value="EAQ72082.1"/>
    <property type="molecule type" value="Genomic_DNA"/>
</dbReference>
<dbReference type="RefSeq" id="WP_002869044.1">
    <property type="nucleotide sequence ID" value="NC_008787.1"/>
</dbReference>
<dbReference type="SMR" id="A1W085"/>
<dbReference type="KEGG" id="cjj:CJJ81176_1116"/>
<dbReference type="eggNOG" id="COG0540">
    <property type="taxonomic scope" value="Bacteria"/>
</dbReference>
<dbReference type="HOGENOM" id="CLU_043846_2_0_7"/>
<dbReference type="UniPathway" id="UPA00070">
    <property type="reaction ID" value="UER00116"/>
</dbReference>
<dbReference type="Proteomes" id="UP000000646">
    <property type="component" value="Chromosome"/>
</dbReference>
<dbReference type="GO" id="GO:0005829">
    <property type="term" value="C:cytosol"/>
    <property type="evidence" value="ECO:0007669"/>
    <property type="project" value="TreeGrafter"/>
</dbReference>
<dbReference type="GO" id="GO:0016597">
    <property type="term" value="F:amino acid binding"/>
    <property type="evidence" value="ECO:0007669"/>
    <property type="project" value="InterPro"/>
</dbReference>
<dbReference type="GO" id="GO:0004070">
    <property type="term" value="F:aspartate carbamoyltransferase activity"/>
    <property type="evidence" value="ECO:0007669"/>
    <property type="project" value="UniProtKB-UniRule"/>
</dbReference>
<dbReference type="GO" id="GO:0006207">
    <property type="term" value="P:'de novo' pyrimidine nucleobase biosynthetic process"/>
    <property type="evidence" value="ECO:0007669"/>
    <property type="project" value="InterPro"/>
</dbReference>
<dbReference type="GO" id="GO:0044205">
    <property type="term" value="P:'de novo' UMP biosynthetic process"/>
    <property type="evidence" value="ECO:0007669"/>
    <property type="project" value="UniProtKB-UniRule"/>
</dbReference>
<dbReference type="GO" id="GO:0006520">
    <property type="term" value="P:amino acid metabolic process"/>
    <property type="evidence" value="ECO:0007669"/>
    <property type="project" value="InterPro"/>
</dbReference>
<dbReference type="Gene3D" id="3.40.50.1370">
    <property type="entry name" value="Aspartate/ornithine carbamoyltransferase"/>
    <property type="match status" value="2"/>
</dbReference>
<dbReference type="HAMAP" id="MF_00001">
    <property type="entry name" value="Asp_carb_tr"/>
    <property type="match status" value="1"/>
</dbReference>
<dbReference type="InterPro" id="IPR006132">
    <property type="entry name" value="Asp/Orn_carbamoyltranf_P-bd"/>
</dbReference>
<dbReference type="InterPro" id="IPR006130">
    <property type="entry name" value="Asp/Orn_carbamoylTrfase"/>
</dbReference>
<dbReference type="InterPro" id="IPR036901">
    <property type="entry name" value="Asp/Orn_carbamoylTrfase_sf"/>
</dbReference>
<dbReference type="InterPro" id="IPR002082">
    <property type="entry name" value="Asp_carbamoyltransf"/>
</dbReference>
<dbReference type="InterPro" id="IPR006131">
    <property type="entry name" value="Asp_carbamoyltransf_Asp/Orn-bd"/>
</dbReference>
<dbReference type="NCBIfam" id="TIGR00670">
    <property type="entry name" value="asp_carb_tr"/>
    <property type="match status" value="1"/>
</dbReference>
<dbReference type="NCBIfam" id="NF002032">
    <property type="entry name" value="PRK00856.1"/>
    <property type="match status" value="1"/>
</dbReference>
<dbReference type="PANTHER" id="PTHR45753:SF6">
    <property type="entry name" value="ASPARTATE CARBAMOYLTRANSFERASE"/>
    <property type="match status" value="1"/>
</dbReference>
<dbReference type="PANTHER" id="PTHR45753">
    <property type="entry name" value="ORNITHINE CARBAMOYLTRANSFERASE, MITOCHONDRIAL"/>
    <property type="match status" value="1"/>
</dbReference>
<dbReference type="Pfam" id="PF00185">
    <property type="entry name" value="OTCace"/>
    <property type="match status" value="1"/>
</dbReference>
<dbReference type="Pfam" id="PF02729">
    <property type="entry name" value="OTCace_N"/>
    <property type="match status" value="1"/>
</dbReference>
<dbReference type="PRINTS" id="PR00100">
    <property type="entry name" value="AOTCASE"/>
</dbReference>
<dbReference type="PRINTS" id="PR00101">
    <property type="entry name" value="ATCASE"/>
</dbReference>
<dbReference type="SUPFAM" id="SSF53671">
    <property type="entry name" value="Aspartate/ornithine carbamoyltransferase"/>
    <property type="match status" value="1"/>
</dbReference>
<dbReference type="PROSITE" id="PS00097">
    <property type="entry name" value="CARBAMOYLTRANSFERASE"/>
    <property type="match status" value="1"/>
</dbReference>
<gene>
    <name evidence="1" type="primary">pyrB</name>
    <name type="ordered locus">CJJ81176_1116</name>
</gene>
<name>PYRB_CAMJJ</name>
<comment type="function">
    <text evidence="1">Catalyzes the condensation of carbamoyl phosphate and aspartate to form carbamoyl aspartate and inorganic phosphate, the committed step in the de novo pyrimidine nucleotide biosynthesis pathway.</text>
</comment>
<comment type="catalytic activity">
    <reaction evidence="1">
        <text>carbamoyl phosphate + L-aspartate = N-carbamoyl-L-aspartate + phosphate + H(+)</text>
        <dbReference type="Rhea" id="RHEA:20013"/>
        <dbReference type="ChEBI" id="CHEBI:15378"/>
        <dbReference type="ChEBI" id="CHEBI:29991"/>
        <dbReference type="ChEBI" id="CHEBI:32814"/>
        <dbReference type="ChEBI" id="CHEBI:43474"/>
        <dbReference type="ChEBI" id="CHEBI:58228"/>
        <dbReference type="EC" id="2.1.3.2"/>
    </reaction>
</comment>
<comment type="pathway">
    <text evidence="1">Pyrimidine metabolism; UMP biosynthesis via de novo pathway; (S)-dihydroorotate from bicarbonate: step 2/3.</text>
</comment>
<comment type="subunit">
    <text evidence="1">Heterododecamer (2C3:3R2) of six catalytic PyrB chains organized as two trimers (C3), and six regulatory PyrI chains organized as three dimers (R2).</text>
</comment>
<comment type="similarity">
    <text evidence="1">Belongs to the aspartate/ornithine carbamoyltransferase superfamily. ATCase family.</text>
</comment>
<keyword id="KW-0665">Pyrimidine biosynthesis</keyword>
<keyword id="KW-0808">Transferase</keyword>
<evidence type="ECO:0000255" key="1">
    <source>
        <dbReference type="HAMAP-Rule" id="MF_00001"/>
    </source>
</evidence>
<feature type="chain" id="PRO_0000301561" description="Aspartate carbamoyltransferase catalytic subunit">
    <location>
        <begin position="1"/>
        <end position="295"/>
    </location>
</feature>
<feature type="binding site" evidence="1">
    <location>
        <position position="49"/>
    </location>
    <ligand>
        <name>carbamoyl phosphate</name>
        <dbReference type="ChEBI" id="CHEBI:58228"/>
    </ligand>
</feature>
<feature type="binding site" evidence="1">
    <location>
        <position position="50"/>
    </location>
    <ligand>
        <name>carbamoyl phosphate</name>
        <dbReference type="ChEBI" id="CHEBI:58228"/>
    </ligand>
</feature>
<feature type="binding site" evidence="1">
    <location>
        <position position="77"/>
    </location>
    <ligand>
        <name>L-aspartate</name>
        <dbReference type="ChEBI" id="CHEBI:29991"/>
    </ligand>
</feature>
<feature type="binding site" evidence="1">
    <location>
        <position position="99"/>
    </location>
    <ligand>
        <name>carbamoyl phosphate</name>
        <dbReference type="ChEBI" id="CHEBI:58228"/>
    </ligand>
</feature>
<feature type="binding site" evidence="1">
    <location>
        <position position="127"/>
    </location>
    <ligand>
        <name>carbamoyl phosphate</name>
        <dbReference type="ChEBI" id="CHEBI:58228"/>
    </ligand>
</feature>
<feature type="binding site" evidence="1">
    <location>
        <position position="130"/>
    </location>
    <ligand>
        <name>carbamoyl phosphate</name>
        <dbReference type="ChEBI" id="CHEBI:58228"/>
    </ligand>
</feature>
<feature type="binding site" evidence="1">
    <location>
        <position position="161"/>
    </location>
    <ligand>
        <name>L-aspartate</name>
        <dbReference type="ChEBI" id="CHEBI:29991"/>
    </ligand>
</feature>
<feature type="binding site" evidence="1">
    <location>
        <position position="212"/>
    </location>
    <ligand>
        <name>L-aspartate</name>
        <dbReference type="ChEBI" id="CHEBI:29991"/>
    </ligand>
</feature>
<feature type="binding site" evidence="1">
    <location>
        <position position="251"/>
    </location>
    <ligand>
        <name>carbamoyl phosphate</name>
        <dbReference type="ChEBI" id="CHEBI:58228"/>
    </ligand>
</feature>
<feature type="binding site" evidence="1">
    <location>
        <position position="252"/>
    </location>
    <ligand>
        <name>carbamoyl phosphate</name>
        <dbReference type="ChEBI" id="CHEBI:58228"/>
    </ligand>
</feature>
<reference key="1">
    <citation type="submission" date="2006-12" db="EMBL/GenBank/DDBJ databases">
        <authorList>
            <person name="Fouts D.E."/>
            <person name="Nelson K.E."/>
            <person name="Sebastian Y."/>
        </authorList>
    </citation>
    <scope>NUCLEOTIDE SEQUENCE [LARGE SCALE GENOMIC DNA]</scope>
    <source>
        <strain>81-176</strain>
    </source>
</reference>
<protein>
    <recommendedName>
        <fullName evidence="1">Aspartate carbamoyltransferase catalytic subunit</fullName>
        <ecNumber evidence="1">2.1.3.2</ecNumber>
    </recommendedName>
    <alternativeName>
        <fullName evidence="1">Aspartate transcarbamylase</fullName>
        <shortName evidence="1">ATCase</shortName>
    </alternativeName>
</protein>
<organism>
    <name type="scientific">Campylobacter jejuni subsp. jejuni serotype O:23/36 (strain 81-176)</name>
    <dbReference type="NCBI Taxonomy" id="354242"/>
    <lineage>
        <taxon>Bacteria</taxon>
        <taxon>Pseudomonadati</taxon>
        <taxon>Campylobacterota</taxon>
        <taxon>Epsilonproteobacteria</taxon>
        <taxon>Campylobacterales</taxon>
        <taxon>Campylobacteraceae</taxon>
        <taxon>Campylobacter</taxon>
    </lineage>
</organism>
<proteinExistence type="inferred from homology"/>
<sequence>MRHLITAKDFNKVEIMELFKEASDFLDEKPRTFLKGKSITTIFFENSTRTLSSFESAARRLGARVLRLDVSRSSSSKGETLYDTAANLDAMSPNAIVVRHANSGVPLILAKHMHCPVVNGGDGKHAHPTQALLDLFTIYNHFQGDVEGKKICIVGDIKNSRVAASNIELLSRFNLDITLVAPPHFMPNTHLKKHYKLDENIIANSDIIMSLRTQTERHNKTVYASLKDYANDFCIQKSLVKDKKLILLHPGPVNRNIDISDEMMSDERTLVLKQVKNGVAIRMAVLKKLILENEG</sequence>
<accession>A1W085</accession>